<organism>
    <name type="scientific">Escherichia coli (strain K12)</name>
    <dbReference type="NCBI Taxonomy" id="83333"/>
    <lineage>
        <taxon>Bacteria</taxon>
        <taxon>Pseudomonadati</taxon>
        <taxon>Pseudomonadota</taxon>
        <taxon>Gammaproteobacteria</taxon>
        <taxon>Enterobacterales</taxon>
        <taxon>Enterobacteriaceae</taxon>
        <taxon>Escherichia</taxon>
    </lineage>
</organism>
<sequence>MNNIQIRNYQPGDFQQLCAIFIRAVTMTASQHYSPQQISAWAQIDESRWKEKLAKSQVWVAIINAQPVGFISRIEHYIDMLFVDPEYTRRGVASALLKPLIKSESELTVDASITAKPFFERYGFQTVKQQRVECRGAWFTNFYMRYKPQH</sequence>
<dbReference type="EC" id="2.3.1.-"/>
<dbReference type="EMBL" id="D38582">
    <property type="protein sequence ID" value="BAA07596.1"/>
    <property type="molecule type" value="Genomic_DNA"/>
</dbReference>
<dbReference type="EMBL" id="U70214">
    <property type="protein sequence ID" value="AAB08654.1"/>
    <property type="molecule type" value="Genomic_DNA"/>
</dbReference>
<dbReference type="EMBL" id="U00096">
    <property type="protein sequence ID" value="AAC73338.1"/>
    <property type="molecule type" value="Genomic_DNA"/>
</dbReference>
<dbReference type="EMBL" id="AP009048">
    <property type="protein sequence ID" value="BAA77903.1"/>
    <property type="molecule type" value="Genomic_DNA"/>
</dbReference>
<dbReference type="PIR" id="C64748">
    <property type="entry name" value="C64748"/>
</dbReference>
<dbReference type="RefSeq" id="NP_414769.1">
    <property type="nucleotide sequence ID" value="NC_000913.3"/>
</dbReference>
<dbReference type="RefSeq" id="WP_001059892.1">
    <property type="nucleotide sequence ID" value="NZ_SSZK01000050.1"/>
</dbReference>
<dbReference type="SMR" id="Q47158"/>
<dbReference type="BioGRID" id="4259769">
    <property type="interactions" value="20"/>
</dbReference>
<dbReference type="FunCoup" id="Q47158">
    <property type="interactions" value="20"/>
</dbReference>
<dbReference type="IntAct" id="Q47158">
    <property type="interactions" value="6"/>
</dbReference>
<dbReference type="STRING" id="511145.b0234"/>
<dbReference type="PaxDb" id="511145-b0234"/>
<dbReference type="EnsemblBacteria" id="AAC73338">
    <property type="protein sequence ID" value="AAC73338"/>
    <property type="gene ID" value="b0234"/>
</dbReference>
<dbReference type="GeneID" id="944912"/>
<dbReference type="KEGG" id="ecj:JW0224"/>
<dbReference type="KEGG" id="eco:b0234"/>
<dbReference type="KEGG" id="ecoc:C3026_01110"/>
<dbReference type="PATRIC" id="fig|511145.12.peg.236"/>
<dbReference type="EchoBASE" id="EB2947"/>
<dbReference type="eggNOG" id="COG0454">
    <property type="taxonomic scope" value="Bacteria"/>
</dbReference>
<dbReference type="HOGENOM" id="CLU_087351_0_1_6"/>
<dbReference type="InParanoid" id="Q47158"/>
<dbReference type="OMA" id="LFYETVH"/>
<dbReference type="OrthoDB" id="5355033at2"/>
<dbReference type="PhylomeDB" id="Q47158"/>
<dbReference type="BioCyc" id="EcoCyc:G6118-MONOMER"/>
<dbReference type="PRO" id="PR:Q47158"/>
<dbReference type="Proteomes" id="UP000000625">
    <property type="component" value="Chromosome"/>
</dbReference>
<dbReference type="GO" id="GO:0016747">
    <property type="term" value="F:acyltransferase activity, transferring groups other than amino-acyl groups"/>
    <property type="evidence" value="ECO:0007669"/>
    <property type="project" value="InterPro"/>
</dbReference>
<dbReference type="GO" id="GO:0006281">
    <property type="term" value="P:DNA repair"/>
    <property type="evidence" value="ECO:0007669"/>
    <property type="project" value="UniProtKB-KW"/>
</dbReference>
<dbReference type="GO" id="GO:0009432">
    <property type="term" value="P:SOS response"/>
    <property type="evidence" value="ECO:0007669"/>
    <property type="project" value="UniProtKB-KW"/>
</dbReference>
<dbReference type="CDD" id="cd04301">
    <property type="entry name" value="NAT_SF"/>
    <property type="match status" value="1"/>
</dbReference>
<dbReference type="Gene3D" id="3.40.630.30">
    <property type="match status" value="1"/>
</dbReference>
<dbReference type="InterPro" id="IPR016181">
    <property type="entry name" value="Acyl_CoA_acyltransferase"/>
</dbReference>
<dbReference type="InterPro" id="IPR000182">
    <property type="entry name" value="GNAT_dom"/>
</dbReference>
<dbReference type="InterPro" id="IPR052564">
    <property type="entry name" value="N-acetyltrans/Recomb-assoc"/>
</dbReference>
<dbReference type="NCBIfam" id="NF007338">
    <property type="entry name" value="PRK09831.1"/>
    <property type="match status" value="1"/>
</dbReference>
<dbReference type="PANTHER" id="PTHR43451:SF1">
    <property type="entry name" value="ACETYLTRANSFERASE"/>
    <property type="match status" value="1"/>
</dbReference>
<dbReference type="PANTHER" id="PTHR43451">
    <property type="entry name" value="ACETYLTRANSFERASE (GNAT) FAMILY PROTEIN"/>
    <property type="match status" value="1"/>
</dbReference>
<dbReference type="Pfam" id="PF13673">
    <property type="entry name" value="Acetyltransf_10"/>
    <property type="match status" value="1"/>
</dbReference>
<dbReference type="SUPFAM" id="SSF55729">
    <property type="entry name" value="Acyl-CoA N-acyltransferases (Nat)"/>
    <property type="match status" value="1"/>
</dbReference>
<dbReference type="PROSITE" id="PS51186">
    <property type="entry name" value="GNAT"/>
    <property type="match status" value="1"/>
</dbReference>
<gene>
    <name type="primary">yafP</name>
    <name type="ordered locus">b0234</name>
    <name type="ordered locus">JW0224</name>
</gene>
<protein>
    <recommendedName>
        <fullName>Uncharacterized N-acetyltransferase YafP</fullName>
        <ecNumber>2.3.1.-</ecNumber>
    </recommendedName>
</protein>
<keyword id="KW-0012">Acyltransferase</keyword>
<keyword id="KW-0227">DNA damage</keyword>
<keyword id="KW-0234">DNA repair</keyword>
<keyword id="KW-1185">Reference proteome</keyword>
<keyword id="KW-0742">SOS response</keyword>
<keyword id="KW-0808">Transferase</keyword>
<name>YAFP_ECOLI</name>
<proteinExistence type="evidence at transcript level"/>
<feature type="chain" id="PRO_0000074608" description="Uncharacterized N-acetyltransferase YafP">
    <location>
        <begin position="1"/>
        <end position="150"/>
    </location>
</feature>
<feature type="domain" description="N-acetyltransferase" evidence="1">
    <location>
        <begin position="4"/>
        <end position="149"/>
    </location>
</feature>
<comment type="induction">
    <text evidence="2">By SOS response. A member of the dinB-yafNOP operon.</text>
</comment>
<comment type="similarity">
    <text evidence="3">Belongs to the acetyltransferase family.</text>
</comment>
<evidence type="ECO:0000255" key="1">
    <source>
        <dbReference type="PROSITE-ProRule" id="PRU00532"/>
    </source>
</evidence>
<evidence type="ECO:0000269" key="2">
    <source>
    </source>
</evidence>
<evidence type="ECO:0000305" key="3"/>
<reference key="1">
    <citation type="journal article" date="1995" name="Mutat. Res.">
        <title>dinP, a new gene in Escherichia coli, whose product shows similarities to UmuC and its homologues.</title>
        <authorList>
            <person name="Ohmori H."/>
            <person name="Hatada E."/>
            <person name="Qiao Y."/>
            <person name="Tsuji M."/>
            <person name="Fukuda R."/>
        </authorList>
    </citation>
    <scope>NUCLEOTIDE SEQUENCE [GENOMIC DNA]</scope>
    <source>
        <strain>K12 / W3110 / ATCC 27325 / DSM 5911</strain>
    </source>
</reference>
<reference key="2">
    <citation type="submission" date="1996-02" db="EMBL/GenBank/DDBJ databases">
        <title>Systematic sequencing of the Escherichia coli genome: analysis of the 4.0 - 6.0 min (189,987 - 281,416bp) region.</title>
        <authorList>
            <person name="Takemoto K."/>
            <person name="Mori H."/>
            <person name="Murayama N."/>
            <person name="Kataoka K."/>
            <person name="Yano M."/>
            <person name="Itoh T."/>
            <person name="Yamamoto Y."/>
            <person name="Inokuchi H."/>
            <person name="Miki T."/>
            <person name="Hatada E."/>
            <person name="Fukuda R."/>
            <person name="Ichihara S."/>
            <person name="Mizuno T."/>
            <person name="Makino K."/>
            <person name="Nakata A."/>
            <person name="Yura T."/>
            <person name="Sampei G."/>
            <person name="Mizobuchi K."/>
        </authorList>
    </citation>
    <scope>NUCLEOTIDE SEQUENCE [LARGE SCALE GENOMIC DNA]</scope>
    <source>
        <strain>K12 / W3110 / ATCC 27325 / DSM 5911</strain>
    </source>
</reference>
<reference key="3">
    <citation type="submission" date="1997-01" db="EMBL/GenBank/DDBJ databases">
        <title>Sequence of minutes 4-25 of Escherichia coli.</title>
        <authorList>
            <person name="Chung E."/>
            <person name="Allen E."/>
            <person name="Araujo R."/>
            <person name="Aparicio A.M."/>
            <person name="Davis K."/>
            <person name="Duncan M."/>
            <person name="Federspiel N."/>
            <person name="Hyman R."/>
            <person name="Kalman S."/>
            <person name="Komp C."/>
            <person name="Kurdi O."/>
            <person name="Lew H."/>
            <person name="Lin D."/>
            <person name="Namath A."/>
            <person name="Oefner P."/>
            <person name="Roberts D."/>
            <person name="Schramm S."/>
            <person name="Davis R.W."/>
        </authorList>
    </citation>
    <scope>NUCLEOTIDE SEQUENCE [LARGE SCALE GENOMIC DNA]</scope>
    <source>
        <strain>K12 / MG1655 / ATCC 47076</strain>
    </source>
</reference>
<reference key="4">
    <citation type="journal article" date="1997" name="Science">
        <title>The complete genome sequence of Escherichia coli K-12.</title>
        <authorList>
            <person name="Blattner F.R."/>
            <person name="Plunkett G. III"/>
            <person name="Bloch C.A."/>
            <person name="Perna N.T."/>
            <person name="Burland V."/>
            <person name="Riley M."/>
            <person name="Collado-Vides J."/>
            <person name="Glasner J.D."/>
            <person name="Rode C.K."/>
            <person name="Mayhew G.F."/>
            <person name="Gregor J."/>
            <person name="Davis N.W."/>
            <person name="Kirkpatrick H.A."/>
            <person name="Goeden M.A."/>
            <person name="Rose D.J."/>
            <person name="Mau B."/>
            <person name="Shao Y."/>
        </authorList>
    </citation>
    <scope>NUCLEOTIDE SEQUENCE [LARGE SCALE GENOMIC DNA]</scope>
    <source>
        <strain>K12 / MG1655 / ATCC 47076</strain>
    </source>
</reference>
<reference key="5">
    <citation type="journal article" date="2006" name="Mol. Syst. Biol.">
        <title>Highly accurate genome sequences of Escherichia coli K-12 strains MG1655 and W3110.</title>
        <authorList>
            <person name="Hayashi K."/>
            <person name="Morooka N."/>
            <person name="Yamamoto Y."/>
            <person name="Fujita K."/>
            <person name="Isono K."/>
            <person name="Choi S."/>
            <person name="Ohtsubo E."/>
            <person name="Baba T."/>
            <person name="Wanner B.L."/>
            <person name="Mori H."/>
            <person name="Horiuchi T."/>
        </authorList>
    </citation>
    <scope>NUCLEOTIDE SEQUENCE [LARGE SCALE GENOMIC DNA]</scope>
    <source>
        <strain>K12 / W3110 / ATCC 27325 / DSM 5911</strain>
    </source>
</reference>
<reference key="6">
    <citation type="journal article" date="2003" name="J. Bacteriol.">
        <title>The dinB operon and spontaneous mutation in Escherichia coli.</title>
        <authorList>
            <person name="McKenzie G.J."/>
            <person name="Magner D.B."/>
            <person name="Lee P.L."/>
            <person name="Rosenberg S.M."/>
        </authorList>
    </citation>
    <scope>INDUCTION</scope>
    <scope>OPERON STRUCTURE</scope>
    <source>
        <strain>K12 / MG1655 / ATCC 47076</strain>
    </source>
</reference>
<accession>Q47158</accession>